<organism>
    <name type="scientific">Arabidopsis thaliana</name>
    <name type="common">Mouse-ear cress</name>
    <dbReference type="NCBI Taxonomy" id="3702"/>
    <lineage>
        <taxon>Eukaryota</taxon>
        <taxon>Viridiplantae</taxon>
        <taxon>Streptophyta</taxon>
        <taxon>Embryophyta</taxon>
        <taxon>Tracheophyta</taxon>
        <taxon>Spermatophyta</taxon>
        <taxon>Magnoliopsida</taxon>
        <taxon>eudicotyledons</taxon>
        <taxon>Gunneridae</taxon>
        <taxon>Pentapetalae</taxon>
        <taxon>rosids</taxon>
        <taxon>malvids</taxon>
        <taxon>Brassicales</taxon>
        <taxon>Brassicaceae</taxon>
        <taxon>Camelineae</taxon>
        <taxon>Arabidopsis</taxon>
    </lineage>
</organism>
<accession>Q2V470</accession>
<sequence length="85" mass="9398">MKSEKSADAYGTYFLLISTIFLLFIARQASSYQMLICLDLNISCADCQKQCDETSYGGMCLNGGRTCCCKKSPPPSYYDPRPPSS</sequence>
<gene>
    <name type="ordered locus">At2g21725</name>
    <name type="ORF">F7D8</name>
</gene>
<feature type="signal peptide" evidence="2">
    <location>
        <begin position="1"/>
        <end position="31"/>
    </location>
</feature>
<feature type="chain" id="PRO_0000379650" description="Putative defensin-like protein 79">
    <location>
        <begin position="32"/>
        <end position="85"/>
    </location>
</feature>
<feature type="disulfide bond" evidence="1">
    <location>
        <begin position="37"/>
        <end position="69"/>
    </location>
</feature>
<feature type="disulfide bond" evidence="1">
    <location>
        <begin position="44"/>
        <end position="60"/>
    </location>
</feature>
<feature type="disulfide bond" evidence="1">
    <location>
        <begin position="47"/>
        <end position="67"/>
    </location>
</feature>
<feature type="disulfide bond" evidence="1">
    <location>
        <begin position="51"/>
        <end position="68"/>
    </location>
</feature>
<keyword id="KW-0929">Antimicrobial</keyword>
<keyword id="KW-1015">Disulfide bond</keyword>
<keyword id="KW-0295">Fungicide</keyword>
<keyword id="KW-0611">Plant defense</keyword>
<keyword id="KW-1185">Reference proteome</keyword>
<keyword id="KW-0964">Secreted</keyword>
<keyword id="KW-0732">Signal</keyword>
<protein>
    <recommendedName>
        <fullName>Putative defensin-like protein 79</fullName>
    </recommendedName>
</protein>
<dbReference type="EMBL" id="AC007019">
    <property type="status" value="NOT_ANNOTATED_CDS"/>
    <property type="molecule type" value="Genomic_DNA"/>
</dbReference>
<dbReference type="EMBL" id="CP002685">
    <property type="protein sequence ID" value="AEC07215.1"/>
    <property type="molecule type" value="Genomic_DNA"/>
</dbReference>
<dbReference type="RefSeq" id="NP_001031392.1">
    <property type="nucleotide sequence ID" value="NM_001036315.1"/>
</dbReference>
<dbReference type="SMR" id="Q2V470"/>
<dbReference type="PaxDb" id="3702-AT2G21725.1"/>
<dbReference type="EnsemblPlants" id="AT2G21725.1">
    <property type="protein sequence ID" value="AT2G21725.1"/>
    <property type="gene ID" value="AT2G21725"/>
</dbReference>
<dbReference type="GeneID" id="3768476"/>
<dbReference type="Gramene" id="AT2G21725.1">
    <property type="protein sequence ID" value="AT2G21725.1"/>
    <property type="gene ID" value="AT2G21725"/>
</dbReference>
<dbReference type="KEGG" id="ath:AT2G21725"/>
<dbReference type="Araport" id="AT2G21725"/>
<dbReference type="TAIR" id="AT2G21725"/>
<dbReference type="HOGENOM" id="CLU_2515734_0_0_1"/>
<dbReference type="InParanoid" id="Q2V470"/>
<dbReference type="OMA" id="CCCKKSP"/>
<dbReference type="OrthoDB" id="1090050at2759"/>
<dbReference type="PRO" id="PR:Q2V470"/>
<dbReference type="Proteomes" id="UP000006548">
    <property type="component" value="Chromosome 2"/>
</dbReference>
<dbReference type="GO" id="GO:0005576">
    <property type="term" value="C:extracellular region"/>
    <property type="evidence" value="ECO:0007669"/>
    <property type="project" value="UniProtKB-SubCell"/>
</dbReference>
<dbReference type="GO" id="GO:0050832">
    <property type="term" value="P:defense response to fungus"/>
    <property type="evidence" value="ECO:0007669"/>
    <property type="project" value="UniProtKB-KW"/>
</dbReference>
<dbReference type="GO" id="GO:0031640">
    <property type="term" value="P:killing of cells of another organism"/>
    <property type="evidence" value="ECO:0007669"/>
    <property type="project" value="UniProtKB-KW"/>
</dbReference>
<proteinExistence type="inferred from homology"/>
<name>DEF79_ARATH</name>
<reference key="1">
    <citation type="journal article" date="1999" name="Nature">
        <title>Sequence and analysis of chromosome 2 of the plant Arabidopsis thaliana.</title>
        <authorList>
            <person name="Lin X."/>
            <person name="Kaul S."/>
            <person name="Rounsley S.D."/>
            <person name="Shea T.P."/>
            <person name="Benito M.-I."/>
            <person name="Town C.D."/>
            <person name="Fujii C.Y."/>
            <person name="Mason T.M."/>
            <person name="Bowman C.L."/>
            <person name="Barnstead M.E."/>
            <person name="Feldblyum T.V."/>
            <person name="Buell C.R."/>
            <person name="Ketchum K.A."/>
            <person name="Lee J.J."/>
            <person name="Ronning C.M."/>
            <person name="Koo H.L."/>
            <person name="Moffat K.S."/>
            <person name="Cronin L.A."/>
            <person name="Shen M."/>
            <person name="Pai G."/>
            <person name="Van Aken S."/>
            <person name="Umayam L."/>
            <person name="Tallon L.J."/>
            <person name="Gill J.E."/>
            <person name="Adams M.D."/>
            <person name="Carrera A.J."/>
            <person name="Creasy T.H."/>
            <person name="Goodman H.M."/>
            <person name="Somerville C.R."/>
            <person name="Copenhaver G.P."/>
            <person name="Preuss D."/>
            <person name="Nierman W.C."/>
            <person name="White O."/>
            <person name="Eisen J.A."/>
            <person name="Salzberg S.L."/>
            <person name="Fraser C.M."/>
            <person name="Venter J.C."/>
        </authorList>
    </citation>
    <scope>NUCLEOTIDE SEQUENCE [LARGE SCALE GENOMIC DNA]</scope>
    <source>
        <strain>cv. Columbia</strain>
    </source>
</reference>
<reference key="2">
    <citation type="journal article" date="2017" name="Plant J.">
        <title>Araport11: a complete reannotation of the Arabidopsis thaliana reference genome.</title>
        <authorList>
            <person name="Cheng C.Y."/>
            <person name="Krishnakumar V."/>
            <person name="Chan A.P."/>
            <person name="Thibaud-Nissen F."/>
            <person name="Schobel S."/>
            <person name="Town C.D."/>
        </authorList>
    </citation>
    <scope>GENOME REANNOTATION</scope>
    <source>
        <strain>cv. Columbia</strain>
    </source>
</reference>
<reference key="3">
    <citation type="journal article" date="2005" name="Plant Physiol.">
        <title>Genome organization of more than 300 defensin-like genes in Arabidopsis.</title>
        <authorList>
            <person name="Silverstein K.A.T."/>
            <person name="Graham M.A."/>
            <person name="Paape T.D."/>
            <person name="VandenBosch K.A."/>
        </authorList>
    </citation>
    <scope>GENE FAMILY</scope>
</reference>
<comment type="subcellular location">
    <subcellularLocation>
        <location evidence="1">Secreted</location>
    </subcellularLocation>
</comment>
<comment type="similarity">
    <text evidence="3">Belongs to the DEFL family.</text>
</comment>
<evidence type="ECO:0000250" key="1"/>
<evidence type="ECO:0000255" key="2"/>
<evidence type="ECO:0000305" key="3"/>